<reference key="1">
    <citation type="journal article" date="2006" name="Nat. Biotechnol.">
        <title>The genome and transcriptomes of the anti-tumor agent Clostridium novyi-NT.</title>
        <authorList>
            <person name="Bettegowda C."/>
            <person name="Huang X."/>
            <person name="Lin J."/>
            <person name="Cheong I."/>
            <person name="Kohli M."/>
            <person name="Szabo S.A."/>
            <person name="Zhang X."/>
            <person name="Diaz L.A. Jr."/>
            <person name="Velculescu V.E."/>
            <person name="Parmigiani G."/>
            <person name="Kinzler K.W."/>
            <person name="Vogelstein B."/>
            <person name="Zhou S."/>
        </authorList>
    </citation>
    <scope>NUCLEOTIDE SEQUENCE [LARGE SCALE GENOMIC DNA]</scope>
    <source>
        <strain>NT</strain>
    </source>
</reference>
<feature type="chain" id="PRO_1000020372" description="Threonine--tRNA ligase">
    <location>
        <begin position="1"/>
        <end position="637"/>
    </location>
</feature>
<feature type="domain" description="TGS" evidence="2">
    <location>
        <begin position="1"/>
        <end position="61"/>
    </location>
</feature>
<feature type="region of interest" description="Catalytic" evidence="1">
    <location>
        <begin position="242"/>
        <end position="532"/>
    </location>
</feature>
<feature type="binding site" evidence="1">
    <location>
        <position position="333"/>
    </location>
    <ligand>
        <name>Zn(2+)</name>
        <dbReference type="ChEBI" id="CHEBI:29105"/>
    </ligand>
</feature>
<feature type="binding site" evidence="1">
    <location>
        <position position="384"/>
    </location>
    <ligand>
        <name>Zn(2+)</name>
        <dbReference type="ChEBI" id="CHEBI:29105"/>
    </ligand>
</feature>
<feature type="binding site" evidence="1">
    <location>
        <position position="509"/>
    </location>
    <ligand>
        <name>Zn(2+)</name>
        <dbReference type="ChEBI" id="CHEBI:29105"/>
    </ligand>
</feature>
<keyword id="KW-0030">Aminoacyl-tRNA synthetase</keyword>
<keyword id="KW-0067">ATP-binding</keyword>
<keyword id="KW-0963">Cytoplasm</keyword>
<keyword id="KW-0436">Ligase</keyword>
<keyword id="KW-0479">Metal-binding</keyword>
<keyword id="KW-0547">Nucleotide-binding</keyword>
<keyword id="KW-0648">Protein biosynthesis</keyword>
<keyword id="KW-1185">Reference proteome</keyword>
<keyword id="KW-0694">RNA-binding</keyword>
<keyword id="KW-0820">tRNA-binding</keyword>
<keyword id="KW-0862">Zinc</keyword>
<comment type="function">
    <text evidence="1">Catalyzes the attachment of threonine to tRNA(Thr) in a two-step reaction: L-threonine is first activated by ATP to form Thr-AMP and then transferred to the acceptor end of tRNA(Thr). Also edits incorrectly charged L-seryl-tRNA(Thr).</text>
</comment>
<comment type="catalytic activity">
    <reaction evidence="1">
        <text>tRNA(Thr) + L-threonine + ATP = L-threonyl-tRNA(Thr) + AMP + diphosphate + H(+)</text>
        <dbReference type="Rhea" id="RHEA:24624"/>
        <dbReference type="Rhea" id="RHEA-COMP:9670"/>
        <dbReference type="Rhea" id="RHEA-COMP:9704"/>
        <dbReference type="ChEBI" id="CHEBI:15378"/>
        <dbReference type="ChEBI" id="CHEBI:30616"/>
        <dbReference type="ChEBI" id="CHEBI:33019"/>
        <dbReference type="ChEBI" id="CHEBI:57926"/>
        <dbReference type="ChEBI" id="CHEBI:78442"/>
        <dbReference type="ChEBI" id="CHEBI:78534"/>
        <dbReference type="ChEBI" id="CHEBI:456215"/>
        <dbReference type="EC" id="6.1.1.3"/>
    </reaction>
</comment>
<comment type="cofactor">
    <cofactor evidence="1">
        <name>Zn(2+)</name>
        <dbReference type="ChEBI" id="CHEBI:29105"/>
    </cofactor>
    <text evidence="1">Binds 1 zinc ion per subunit.</text>
</comment>
<comment type="subunit">
    <text evidence="1">Homodimer.</text>
</comment>
<comment type="subcellular location">
    <subcellularLocation>
        <location evidence="1">Cytoplasm</location>
    </subcellularLocation>
</comment>
<comment type="similarity">
    <text evidence="1">Belongs to the class-II aminoacyl-tRNA synthetase family.</text>
</comment>
<accession>A0PZN1</accession>
<organism>
    <name type="scientific">Clostridium novyi (strain NT)</name>
    <dbReference type="NCBI Taxonomy" id="386415"/>
    <lineage>
        <taxon>Bacteria</taxon>
        <taxon>Bacillati</taxon>
        <taxon>Bacillota</taxon>
        <taxon>Clostridia</taxon>
        <taxon>Eubacteriales</taxon>
        <taxon>Clostridiaceae</taxon>
        <taxon>Clostridium</taxon>
    </lineage>
</organism>
<gene>
    <name evidence="1" type="primary">thrS</name>
    <name type="ordered locus">NT01CX_1760</name>
</gene>
<proteinExistence type="inferred from homology"/>
<protein>
    <recommendedName>
        <fullName evidence="1">Threonine--tRNA ligase</fullName>
        <ecNumber evidence="1">6.1.1.3</ecNumber>
    </recommendedName>
    <alternativeName>
        <fullName evidence="1">Threonyl-tRNA synthetase</fullName>
        <shortName evidence="1">ThrRS</shortName>
    </alternativeName>
</protein>
<sequence length="637" mass="73417">MIKITLKDGKVLEVEKGLTVSEIAARISTSLRKKALGAKINGEKAELMDVINEDSTLEILTFEDQEGKDTLRHTASHILAQAVKRLYPEVKLAIGPSIENGFYYDFDAEFSFTPEILEKIEKEMNKIVKENLQLKKFTKSREDAINFMKERNEDYKVELIEDLPEESIISFYEQGDFVDLCAGPHVPSTKEVKAIKLLSVAGAYWRGNENNKMLQRIYGTAFTKKAELEEYLHMLEEAKKRDHRKLGKELGLFDLKEEGPGFPFFYPKGMILRNTLENYWREMHEKAGYGEIRTPIILNEKLWHQSGHWDHYKENMYFTKIDGEDYAIKPMNCPGSILVYKSDLHSYRELPIRLGELGLVHRHEYSGALHGLMRVRNFTQDDAHIFMTKEQITSEILGVIKMIDNFYSLFGFEYFVELSTRPEDSMGSDEDWEAATNGLIKALNEAGLEYKINEGDGAFYGPKIDFHLRDCLGRTWQCGTIQLDFQMPERFDLSYVGADGEKHRPVMAHRVIFGSIERFIGILTEHYAGAFPTWLAPVQVKIMNITDNQVEYCKEIQKVLNENGIRVELDLRNEKIGYKIREAQLQKIPYMLVLGDKEMNEKTIAVRARKQGDLGAMNLTDFVAMVKKEIEEKTNCL</sequence>
<name>SYT_CLONN</name>
<dbReference type="EC" id="6.1.1.3" evidence="1"/>
<dbReference type="EMBL" id="CP000382">
    <property type="protein sequence ID" value="ABK61560.1"/>
    <property type="molecule type" value="Genomic_DNA"/>
</dbReference>
<dbReference type="RefSeq" id="WP_011721838.1">
    <property type="nucleotide sequence ID" value="NC_008593.1"/>
</dbReference>
<dbReference type="SMR" id="A0PZN1"/>
<dbReference type="STRING" id="386415.NT01CX_1760"/>
<dbReference type="KEGG" id="cno:NT01CX_1760"/>
<dbReference type="eggNOG" id="COG0441">
    <property type="taxonomic scope" value="Bacteria"/>
</dbReference>
<dbReference type="HOGENOM" id="CLU_008554_0_1_9"/>
<dbReference type="Proteomes" id="UP000008220">
    <property type="component" value="Chromosome"/>
</dbReference>
<dbReference type="GO" id="GO:0005737">
    <property type="term" value="C:cytoplasm"/>
    <property type="evidence" value="ECO:0007669"/>
    <property type="project" value="UniProtKB-SubCell"/>
</dbReference>
<dbReference type="GO" id="GO:0005524">
    <property type="term" value="F:ATP binding"/>
    <property type="evidence" value="ECO:0007669"/>
    <property type="project" value="UniProtKB-UniRule"/>
</dbReference>
<dbReference type="GO" id="GO:0140096">
    <property type="term" value="F:catalytic activity, acting on a protein"/>
    <property type="evidence" value="ECO:0007669"/>
    <property type="project" value="UniProtKB-ARBA"/>
</dbReference>
<dbReference type="GO" id="GO:0046872">
    <property type="term" value="F:metal ion binding"/>
    <property type="evidence" value="ECO:0007669"/>
    <property type="project" value="UniProtKB-KW"/>
</dbReference>
<dbReference type="GO" id="GO:0004829">
    <property type="term" value="F:threonine-tRNA ligase activity"/>
    <property type="evidence" value="ECO:0007669"/>
    <property type="project" value="UniProtKB-UniRule"/>
</dbReference>
<dbReference type="GO" id="GO:0016740">
    <property type="term" value="F:transferase activity"/>
    <property type="evidence" value="ECO:0007669"/>
    <property type="project" value="UniProtKB-ARBA"/>
</dbReference>
<dbReference type="GO" id="GO:0000049">
    <property type="term" value="F:tRNA binding"/>
    <property type="evidence" value="ECO:0007669"/>
    <property type="project" value="UniProtKB-KW"/>
</dbReference>
<dbReference type="GO" id="GO:0006435">
    <property type="term" value="P:threonyl-tRNA aminoacylation"/>
    <property type="evidence" value="ECO:0007669"/>
    <property type="project" value="UniProtKB-UniRule"/>
</dbReference>
<dbReference type="CDD" id="cd01667">
    <property type="entry name" value="TGS_ThrRS"/>
    <property type="match status" value="1"/>
</dbReference>
<dbReference type="CDD" id="cd00860">
    <property type="entry name" value="ThrRS_anticodon"/>
    <property type="match status" value="1"/>
</dbReference>
<dbReference type="CDD" id="cd00771">
    <property type="entry name" value="ThrRS_core"/>
    <property type="match status" value="1"/>
</dbReference>
<dbReference type="FunFam" id="3.10.20.30:FF:000005">
    <property type="entry name" value="Threonine--tRNA ligase"/>
    <property type="match status" value="1"/>
</dbReference>
<dbReference type="FunFam" id="3.30.54.20:FF:000002">
    <property type="entry name" value="Threonine--tRNA ligase"/>
    <property type="match status" value="1"/>
</dbReference>
<dbReference type="FunFam" id="3.30.930.10:FF:000002">
    <property type="entry name" value="Threonine--tRNA ligase"/>
    <property type="match status" value="1"/>
</dbReference>
<dbReference type="FunFam" id="3.40.50.800:FF:000001">
    <property type="entry name" value="Threonine--tRNA ligase"/>
    <property type="match status" value="1"/>
</dbReference>
<dbReference type="FunFam" id="3.30.980.10:FF:000005">
    <property type="entry name" value="Threonyl-tRNA synthetase, mitochondrial"/>
    <property type="match status" value="1"/>
</dbReference>
<dbReference type="Gene3D" id="3.10.20.30">
    <property type="match status" value="1"/>
</dbReference>
<dbReference type="Gene3D" id="3.30.54.20">
    <property type="match status" value="1"/>
</dbReference>
<dbReference type="Gene3D" id="3.40.50.800">
    <property type="entry name" value="Anticodon-binding domain"/>
    <property type="match status" value="1"/>
</dbReference>
<dbReference type="Gene3D" id="3.30.930.10">
    <property type="entry name" value="Bira Bifunctional Protein, Domain 2"/>
    <property type="match status" value="1"/>
</dbReference>
<dbReference type="Gene3D" id="3.30.980.10">
    <property type="entry name" value="Threonyl-trna Synthetase, Chain A, domain 2"/>
    <property type="match status" value="1"/>
</dbReference>
<dbReference type="HAMAP" id="MF_00184">
    <property type="entry name" value="Thr_tRNA_synth"/>
    <property type="match status" value="1"/>
</dbReference>
<dbReference type="InterPro" id="IPR002314">
    <property type="entry name" value="aa-tRNA-synt_IIb"/>
</dbReference>
<dbReference type="InterPro" id="IPR006195">
    <property type="entry name" value="aa-tRNA-synth_II"/>
</dbReference>
<dbReference type="InterPro" id="IPR045864">
    <property type="entry name" value="aa-tRNA-synth_II/BPL/LPL"/>
</dbReference>
<dbReference type="InterPro" id="IPR004154">
    <property type="entry name" value="Anticodon-bd"/>
</dbReference>
<dbReference type="InterPro" id="IPR036621">
    <property type="entry name" value="Anticodon-bd_dom_sf"/>
</dbReference>
<dbReference type="InterPro" id="IPR012675">
    <property type="entry name" value="Beta-grasp_dom_sf"/>
</dbReference>
<dbReference type="InterPro" id="IPR004095">
    <property type="entry name" value="TGS"/>
</dbReference>
<dbReference type="InterPro" id="IPR012676">
    <property type="entry name" value="TGS-like"/>
</dbReference>
<dbReference type="InterPro" id="IPR002320">
    <property type="entry name" value="Thr-tRNA-ligase_IIa"/>
</dbReference>
<dbReference type="InterPro" id="IPR018163">
    <property type="entry name" value="Thr/Ala-tRNA-synth_IIc_edit"/>
</dbReference>
<dbReference type="InterPro" id="IPR047246">
    <property type="entry name" value="ThrRS_anticodon"/>
</dbReference>
<dbReference type="InterPro" id="IPR033728">
    <property type="entry name" value="ThrRS_core"/>
</dbReference>
<dbReference type="InterPro" id="IPR012947">
    <property type="entry name" value="tRNA_SAD"/>
</dbReference>
<dbReference type="NCBIfam" id="TIGR00418">
    <property type="entry name" value="thrS"/>
    <property type="match status" value="1"/>
</dbReference>
<dbReference type="PANTHER" id="PTHR11451:SF44">
    <property type="entry name" value="THREONINE--TRNA LIGASE, CHLOROPLASTIC_MITOCHONDRIAL 2"/>
    <property type="match status" value="1"/>
</dbReference>
<dbReference type="PANTHER" id="PTHR11451">
    <property type="entry name" value="THREONINE-TRNA LIGASE"/>
    <property type="match status" value="1"/>
</dbReference>
<dbReference type="Pfam" id="PF03129">
    <property type="entry name" value="HGTP_anticodon"/>
    <property type="match status" value="1"/>
</dbReference>
<dbReference type="Pfam" id="PF02824">
    <property type="entry name" value="TGS"/>
    <property type="match status" value="1"/>
</dbReference>
<dbReference type="Pfam" id="PF00587">
    <property type="entry name" value="tRNA-synt_2b"/>
    <property type="match status" value="1"/>
</dbReference>
<dbReference type="Pfam" id="PF07973">
    <property type="entry name" value="tRNA_SAD"/>
    <property type="match status" value="1"/>
</dbReference>
<dbReference type="PRINTS" id="PR01047">
    <property type="entry name" value="TRNASYNTHTHR"/>
</dbReference>
<dbReference type="SMART" id="SM00863">
    <property type="entry name" value="tRNA_SAD"/>
    <property type="match status" value="1"/>
</dbReference>
<dbReference type="SUPFAM" id="SSF52954">
    <property type="entry name" value="Class II aaRS ABD-related"/>
    <property type="match status" value="1"/>
</dbReference>
<dbReference type="SUPFAM" id="SSF55681">
    <property type="entry name" value="Class II aaRS and biotin synthetases"/>
    <property type="match status" value="1"/>
</dbReference>
<dbReference type="SUPFAM" id="SSF81271">
    <property type="entry name" value="TGS-like"/>
    <property type="match status" value="1"/>
</dbReference>
<dbReference type="SUPFAM" id="SSF55186">
    <property type="entry name" value="ThrRS/AlaRS common domain"/>
    <property type="match status" value="1"/>
</dbReference>
<dbReference type="PROSITE" id="PS50862">
    <property type="entry name" value="AA_TRNA_LIGASE_II"/>
    <property type="match status" value="1"/>
</dbReference>
<dbReference type="PROSITE" id="PS51880">
    <property type="entry name" value="TGS"/>
    <property type="match status" value="1"/>
</dbReference>
<evidence type="ECO:0000255" key="1">
    <source>
        <dbReference type="HAMAP-Rule" id="MF_00184"/>
    </source>
</evidence>
<evidence type="ECO:0000255" key="2">
    <source>
        <dbReference type="PROSITE-ProRule" id="PRU01228"/>
    </source>
</evidence>